<comment type="function">
    <text evidence="1">Thiol-specific peroxidase that catalyzes the reduction of hydrogen peroxide and organic hydroperoxides to water and alcohols, respectively. Plays a role in cell protection against oxidative stress by detoxifying peroxides.</text>
</comment>
<comment type="catalytic activity">
    <reaction evidence="1">
        <text>a hydroperoxide + [thioredoxin]-dithiol = an alcohol + [thioredoxin]-disulfide + H2O</text>
        <dbReference type="Rhea" id="RHEA:62620"/>
        <dbReference type="Rhea" id="RHEA-COMP:10698"/>
        <dbReference type="Rhea" id="RHEA-COMP:10700"/>
        <dbReference type="ChEBI" id="CHEBI:15377"/>
        <dbReference type="ChEBI" id="CHEBI:29950"/>
        <dbReference type="ChEBI" id="CHEBI:30879"/>
        <dbReference type="ChEBI" id="CHEBI:35924"/>
        <dbReference type="ChEBI" id="CHEBI:50058"/>
        <dbReference type="EC" id="1.11.1.24"/>
    </reaction>
</comment>
<comment type="subunit">
    <text evidence="1">Homodecamer. Pentamer of dimers that assemble into a ring structure.</text>
</comment>
<comment type="subcellular location">
    <subcellularLocation>
        <location evidence="1">Cytoplasm</location>
    </subcellularLocation>
</comment>
<comment type="miscellaneous">
    <text evidence="1">The active site is a conserved redox-active cysteine residue, the peroxidatic cysteine (C(P)), which makes the nucleophilic attack on the peroxide substrate. The peroxide oxidizes the C(P)-SH to cysteine sulfenic acid (C(P)-SOH), which then reacts with another cysteine residue, the resolving cysteine (C(R)), to form a disulfide bridge. The disulfide is subsequently reduced by an appropriate electron donor to complete the catalytic cycle. Although the primary sequence of this enzyme is similar to those of the 1-Cys Prx6 enzymes, its catalytic properties resemble those of the typical 2-Cys Prxs and C(R) is provided by the other dimeric subunit to form an intersubunit disulfide. The disulfide is subsequently reduced by thioredoxin.</text>
</comment>
<comment type="similarity">
    <text evidence="1">Belongs to the peroxiredoxin family. Prx6 subfamily.</text>
</comment>
<comment type="sequence caution" evidence="2">
    <conflict type="erroneous initiation">
        <sequence resource="EMBL-CDS" id="AAB98731"/>
    </conflict>
</comment>
<sequence>MPVIGEKFPEVEVKTTHGAIKLPDYYVEKGKWFVLFSHPADFTPVCTTEFVGFQKRYDEFRKLNTELIGLSIDQVFSHLKWVEWIKEKLNVEIEFPIIADDRGELAEKLGMISPYKGNNTVRAVFVVDNKGIIRAIIYYPQEVGRNLDEIVRLVKALQVSDEKGVAMPANWPENDLIGDKVIIPPASSVEEIKQRKEACEKGEIECLDWWFCYKKLD</sequence>
<keyword id="KW-0049">Antioxidant</keyword>
<keyword id="KW-0963">Cytoplasm</keyword>
<keyword id="KW-1015">Disulfide bond</keyword>
<keyword id="KW-0560">Oxidoreductase</keyword>
<keyword id="KW-0575">Peroxidase</keyword>
<keyword id="KW-0676">Redox-active center</keyword>
<keyword id="KW-1185">Reference proteome</keyword>
<evidence type="ECO:0000255" key="1">
    <source>
        <dbReference type="HAMAP-Rule" id="MF_00401"/>
    </source>
</evidence>
<evidence type="ECO:0000305" key="2"/>
<protein>
    <recommendedName>
        <fullName evidence="1">Peroxiredoxin</fullName>
        <ecNumber evidence="1">1.11.1.24</ecNumber>
    </recommendedName>
    <alternativeName>
        <fullName evidence="1">Thioredoxin peroxidase</fullName>
    </alternativeName>
    <alternativeName>
        <fullName evidence="1">Thioredoxin-dependent peroxiredoxin</fullName>
    </alternativeName>
</protein>
<dbReference type="EC" id="1.11.1.24" evidence="1"/>
<dbReference type="EMBL" id="L77117">
    <property type="protein sequence ID" value="AAB98731.1"/>
    <property type="status" value="ALT_INIT"/>
    <property type="molecule type" value="Genomic_DNA"/>
</dbReference>
<dbReference type="PIR" id="H64391">
    <property type="entry name" value="H64391"/>
</dbReference>
<dbReference type="RefSeq" id="WP_010870241.1">
    <property type="nucleotide sequence ID" value="NC_000909.1"/>
</dbReference>
<dbReference type="SMR" id="Q58146"/>
<dbReference type="FunCoup" id="Q58146">
    <property type="interactions" value="33"/>
</dbReference>
<dbReference type="STRING" id="243232.MJ_0736"/>
<dbReference type="PaxDb" id="243232-MJ_0736"/>
<dbReference type="EnsemblBacteria" id="AAB98731">
    <property type="protein sequence ID" value="AAB98731"/>
    <property type="gene ID" value="MJ_0736"/>
</dbReference>
<dbReference type="GeneID" id="1451613"/>
<dbReference type="KEGG" id="mja:MJ_0736"/>
<dbReference type="eggNOG" id="arCOG00312">
    <property type="taxonomic scope" value="Archaea"/>
</dbReference>
<dbReference type="HOGENOM" id="CLU_042529_4_4_2"/>
<dbReference type="InParanoid" id="Q58146"/>
<dbReference type="OrthoDB" id="6924at2157"/>
<dbReference type="PhylomeDB" id="Q58146"/>
<dbReference type="Proteomes" id="UP000000805">
    <property type="component" value="Chromosome"/>
</dbReference>
<dbReference type="GO" id="GO:0005829">
    <property type="term" value="C:cytosol"/>
    <property type="evidence" value="ECO:0000318"/>
    <property type="project" value="GO_Central"/>
</dbReference>
<dbReference type="GO" id="GO:0004601">
    <property type="term" value="F:peroxidase activity"/>
    <property type="evidence" value="ECO:0000318"/>
    <property type="project" value="GO_Central"/>
</dbReference>
<dbReference type="GO" id="GO:0140824">
    <property type="term" value="F:thioredoxin-dependent peroxiredoxin activity"/>
    <property type="evidence" value="ECO:0007669"/>
    <property type="project" value="UniProtKB-EC"/>
</dbReference>
<dbReference type="GO" id="GO:0045454">
    <property type="term" value="P:cell redox homeostasis"/>
    <property type="evidence" value="ECO:0000318"/>
    <property type="project" value="GO_Central"/>
</dbReference>
<dbReference type="CDD" id="cd03016">
    <property type="entry name" value="PRX_1cys"/>
    <property type="match status" value="1"/>
</dbReference>
<dbReference type="FunFam" id="3.30.1020.10:FF:000002">
    <property type="entry name" value="Peroxiredoxin"/>
    <property type="match status" value="1"/>
</dbReference>
<dbReference type="FunFam" id="3.40.30.10:FF:000011">
    <property type="entry name" value="Peroxiredoxin PRX1"/>
    <property type="match status" value="1"/>
</dbReference>
<dbReference type="Gene3D" id="3.30.1020.10">
    <property type="entry name" value="Antioxidant, Horf6, Chain A, domain2"/>
    <property type="match status" value="1"/>
</dbReference>
<dbReference type="Gene3D" id="3.40.30.10">
    <property type="entry name" value="Glutaredoxin"/>
    <property type="match status" value="1"/>
</dbReference>
<dbReference type="HAMAP" id="MF_00401">
    <property type="entry name" value="Peroxiredoxin"/>
    <property type="match status" value="1"/>
</dbReference>
<dbReference type="InterPro" id="IPR000866">
    <property type="entry name" value="AhpC/TSA"/>
</dbReference>
<dbReference type="InterPro" id="IPR050217">
    <property type="entry name" value="Peroxiredoxin"/>
</dbReference>
<dbReference type="InterPro" id="IPR024706">
    <property type="entry name" value="Peroxiredoxin_AhpC-typ"/>
</dbReference>
<dbReference type="InterPro" id="IPR019479">
    <property type="entry name" value="Peroxiredoxin_C"/>
</dbReference>
<dbReference type="InterPro" id="IPR022915">
    <property type="entry name" value="Peroxiredoxin_TDXH"/>
</dbReference>
<dbReference type="InterPro" id="IPR045020">
    <property type="entry name" value="PRX_1cys"/>
</dbReference>
<dbReference type="InterPro" id="IPR036249">
    <property type="entry name" value="Thioredoxin-like_sf"/>
</dbReference>
<dbReference type="InterPro" id="IPR013766">
    <property type="entry name" value="Thioredoxin_domain"/>
</dbReference>
<dbReference type="NCBIfam" id="NF009668">
    <property type="entry name" value="PRK13189.1"/>
    <property type="match status" value="1"/>
</dbReference>
<dbReference type="PANTHER" id="PTHR10681:SF171">
    <property type="entry name" value="PEROXIREDOXIN 4"/>
    <property type="match status" value="1"/>
</dbReference>
<dbReference type="PANTHER" id="PTHR10681">
    <property type="entry name" value="THIOREDOXIN PEROXIDASE"/>
    <property type="match status" value="1"/>
</dbReference>
<dbReference type="Pfam" id="PF10417">
    <property type="entry name" value="1-cysPrx_C"/>
    <property type="match status" value="1"/>
</dbReference>
<dbReference type="Pfam" id="PF00578">
    <property type="entry name" value="AhpC-TSA"/>
    <property type="match status" value="1"/>
</dbReference>
<dbReference type="PIRSF" id="PIRSF000239">
    <property type="entry name" value="AHPC"/>
    <property type="match status" value="1"/>
</dbReference>
<dbReference type="SUPFAM" id="SSF52833">
    <property type="entry name" value="Thioredoxin-like"/>
    <property type="match status" value="1"/>
</dbReference>
<dbReference type="PROSITE" id="PS51352">
    <property type="entry name" value="THIOREDOXIN_2"/>
    <property type="match status" value="1"/>
</dbReference>
<feature type="chain" id="PRO_0000135155" description="Peroxiredoxin">
    <location>
        <begin position="1"/>
        <end position="217"/>
    </location>
</feature>
<feature type="domain" description="Thioredoxin" evidence="1">
    <location>
        <begin position="2"/>
        <end position="159"/>
    </location>
</feature>
<feature type="active site" description="Cysteine sulfenic acid (-SOH) intermediate" evidence="1">
    <location>
        <position position="46"/>
    </location>
</feature>
<feature type="binding site" evidence="1">
    <location>
        <position position="122"/>
    </location>
    <ligand>
        <name>substrate</name>
    </ligand>
</feature>
<feature type="disulfide bond" description="Interchain (with C-212); in linked form" evidence="1">
    <location>
        <position position="46"/>
    </location>
</feature>
<feature type="disulfide bond" description="Alternate" evidence="1">
    <location>
        <begin position="206"/>
        <end position="212"/>
    </location>
</feature>
<feature type="disulfide bond" description="Interchain (with C-46); in linked form" evidence="1">
    <location>
        <position position="212"/>
    </location>
</feature>
<gene>
    <name type="ordered locus">MJ0736</name>
</gene>
<reference key="1">
    <citation type="journal article" date="1996" name="Science">
        <title>Complete genome sequence of the methanogenic archaeon, Methanococcus jannaschii.</title>
        <authorList>
            <person name="Bult C.J."/>
            <person name="White O."/>
            <person name="Olsen G.J."/>
            <person name="Zhou L."/>
            <person name="Fleischmann R.D."/>
            <person name="Sutton G.G."/>
            <person name="Blake J.A."/>
            <person name="FitzGerald L.M."/>
            <person name="Clayton R.A."/>
            <person name="Gocayne J.D."/>
            <person name="Kerlavage A.R."/>
            <person name="Dougherty B.A."/>
            <person name="Tomb J.-F."/>
            <person name="Adams M.D."/>
            <person name="Reich C.I."/>
            <person name="Overbeek R."/>
            <person name="Kirkness E.F."/>
            <person name="Weinstock K.G."/>
            <person name="Merrick J.M."/>
            <person name="Glodek A."/>
            <person name="Scott J.L."/>
            <person name="Geoghagen N.S.M."/>
            <person name="Weidman J.F."/>
            <person name="Fuhrmann J.L."/>
            <person name="Nguyen D."/>
            <person name="Utterback T.R."/>
            <person name="Kelley J.M."/>
            <person name="Peterson J.D."/>
            <person name="Sadow P.W."/>
            <person name="Hanna M.C."/>
            <person name="Cotton M.D."/>
            <person name="Roberts K.M."/>
            <person name="Hurst M.A."/>
            <person name="Kaine B.P."/>
            <person name="Borodovsky M."/>
            <person name="Klenk H.-P."/>
            <person name="Fraser C.M."/>
            <person name="Smith H.O."/>
            <person name="Woese C.R."/>
            <person name="Venter J.C."/>
        </authorList>
    </citation>
    <scope>NUCLEOTIDE SEQUENCE [LARGE SCALE GENOMIC DNA]</scope>
    <source>
        <strain>ATCC 43067 / DSM 2661 / JAL-1 / JCM 10045 / NBRC 100440</strain>
    </source>
</reference>
<name>TDXH_METJA</name>
<proteinExistence type="inferred from homology"/>
<accession>Q58146</accession>
<organism>
    <name type="scientific">Methanocaldococcus jannaschii (strain ATCC 43067 / DSM 2661 / JAL-1 / JCM 10045 / NBRC 100440)</name>
    <name type="common">Methanococcus jannaschii</name>
    <dbReference type="NCBI Taxonomy" id="243232"/>
    <lineage>
        <taxon>Archaea</taxon>
        <taxon>Methanobacteriati</taxon>
        <taxon>Methanobacteriota</taxon>
        <taxon>Methanomada group</taxon>
        <taxon>Methanococci</taxon>
        <taxon>Methanococcales</taxon>
        <taxon>Methanocaldococcaceae</taxon>
        <taxon>Methanocaldococcus</taxon>
    </lineage>
</organism>